<feature type="chain" id="PRO_1000213997" description="GTP 3',8-cyclase">
    <location>
        <begin position="1"/>
        <end position="329"/>
    </location>
</feature>
<feature type="domain" description="Radical SAM core" evidence="2">
    <location>
        <begin position="8"/>
        <end position="234"/>
    </location>
</feature>
<feature type="binding site" evidence="1">
    <location>
        <position position="17"/>
    </location>
    <ligand>
        <name>GTP</name>
        <dbReference type="ChEBI" id="CHEBI:37565"/>
    </ligand>
</feature>
<feature type="binding site" evidence="1">
    <location>
        <position position="24"/>
    </location>
    <ligand>
        <name>[4Fe-4S] cluster</name>
        <dbReference type="ChEBI" id="CHEBI:49883"/>
        <label>1</label>
        <note>4Fe-4S-S-AdoMet</note>
    </ligand>
</feature>
<feature type="binding site" evidence="1">
    <location>
        <position position="28"/>
    </location>
    <ligand>
        <name>[4Fe-4S] cluster</name>
        <dbReference type="ChEBI" id="CHEBI:49883"/>
        <label>1</label>
        <note>4Fe-4S-S-AdoMet</note>
    </ligand>
</feature>
<feature type="binding site" evidence="1">
    <location>
        <position position="30"/>
    </location>
    <ligand>
        <name>S-adenosyl-L-methionine</name>
        <dbReference type="ChEBI" id="CHEBI:59789"/>
    </ligand>
</feature>
<feature type="binding site" evidence="1">
    <location>
        <position position="31"/>
    </location>
    <ligand>
        <name>[4Fe-4S] cluster</name>
        <dbReference type="ChEBI" id="CHEBI:49883"/>
        <label>1</label>
        <note>4Fe-4S-S-AdoMet</note>
    </ligand>
</feature>
<feature type="binding site" evidence="1">
    <location>
        <position position="68"/>
    </location>
    <ligand>
        <name>GTP</name>
        <dbReference type="ChEBI" id="CHEBI:37565"/>
    </ligand>
</feature>
<feature type="binding site" evidence="1">
    <location>
        <position position="72"/>
    </location>
    <ligand>
        <name>S-adenosyl-L-methionine</name>
        <dbReference type="ChEBI" id="CHEBI:59789"/>
    </ligand>
</feature>
<feature type="binding site" evidence="1">
    <location>
        <position position="99"/>
    </location>
    <ligand>
        <name>GTP</name>
        <dbReference type="ChEBI" id="CHEBI:37565"/>
    </ligand>
</feature>
<feature type="binding site" evidence="1">
    <location>
        <position position="123"/>
    </location>
    <ligand>
        <name>S-adenosyl-L-methionine</name>
        <dbReference type="ChEBI" id="CHEBI:59789"/>
    </ligand>
</feature>
<feature type="binding site" evidence="1">
    <location>
        <position position="160"/>
    </location>
    <ligand>
        <name>GTP</name>
        <dbReference type="ChEBI" id="CHEBI:37565"/>
    </ligand>
</feature>
<feature type="binding site" evidence="1">
    <location>
        <position position="194"/>
    </location>
    <ligand>
        <name>S-adenosyl-L-methionine</name>
        <dbReference type="ChEBI" id="CHEBI:59789"/>
    </ligand>
</feature>
<feature type="binding site" evidence="1">
    <location>
        <position position="257"/>
    </location>
    <ligand>
        <name>[4Fe-4S] cluster</name>
        <dbReference type="ChEBI" id="CHEBI:49883"/>
        <label>2</label>
        <note>4Fe-4S-substrate</note>
    </ligand>
</feature>
<feature type="binding site" evidence="1">
    <location>
        <position position="260"/>
    </location>
    <ligand>
        <name>[4Fe-4S] cluster</name>
        <dbReference type="ChEBI" id="CHEBI:49883"/>
        <label>2</label>
        <note>4Fe-4S-substrate</note>
    </ligand>
</feature>
<feature type="binding site" evidence="1">
    <location>
        <begin position="262"/>
        <end position="264"/>
    </location>
    <ligand>
        <name>GTP</name>
        <dbReference type="ChEBI" id="CHEBI:37565"/>
    </ligand>
</feature>
<feature type="binding site" evidence="1">
    <location>
        <position position="274"/>
    </location>
    <ligand>
        <name>[4Fe-4S] cluster</name>
        <dbReference type="ChEBI" id="CHEBI:49883"/>
        <label>2</label>
        <note>4Fe-4S-substrate</note>
    </ligand>
</feature>
<keyword id="KW-0004">4Fe-4S</keyword>
<keyword id="KW-0342">GTP-binding</keyword>
<keyword id="KW-0408">Iron</keyword>
<keyword id="KW-0411">Iron-sulfur</keyword>
<keyword id="KW-0456">Lyase</keyword>
<keyword id="KW-0479">Metal-binding</keyword>
<keyword id="KW-0501">Molybdenum cofactor biosynthesis</keyword>
<keyword id="KW-0547">Nucleotide-binding</keyword>
<keyword id="KW-0949">S-adenosyl-L-methionine</keyword>
<organism>
    <name type="scientific">Escherichia coli (strain K12 / MC4100 / BW2952)</name>
    <dbReference type="NCBI Taxonomy" id="595496"/>
    <lineage>
        <taxon>Bacteria</taxon>
        <taxon>Pseudomonadati</taxon>
        <taxon>Pseudomonadota</taxon>
        <taxon>Gammaproteobacteria</taxon>
        <taxon>Enterobacterales</taxon>
        <taxon>Enterobacteriaceae</taxon>
        <taxon>Escherichia</taxon>
    </lineage>
</organism>
<protein>
    <recommendedName>
        <fullName evidence="1">GTP 3',8-cyclase</fullName>
        <ecNumber evidence="1">4.1.99.22</ecNumber>
    </recommendedName>
    <alternativeName>
        <fullName evidence="1">Molybdenum cofactor biosynthesis protein A</fullName>
    </alternativeName>
</protein>
<reference key="1">
    <citation type="journal article" date="2009" name="J. Bacteriol.">
        <title>Genomic sequencing reveals regulatory mutations and recombinational events in the widely used MC4100 lineage of Escherichia coli K-12.</title>
        <authorList>
            <person name="Ferenci T."/>
            <person name="Zhou Z."/>
            <person name="Betteridge T."/>
            <person name="Ren Y."/>
            <person name="Liu Y."/>
            <person name="Feng L."/>
            <person name="Reeves P.R."/>
            <person name="Wang L."/>
        </authorList>
    </citation>
    <scope>NUCLEOTIDE SEQUENCE [LARGE SCALE GENOMIC DNA]</scope>
    <source>
        <strain>K12 / MC4100 / BW2952</strain>
    </source>
</reference>
<gene>
    <name evidence="1" type="primary">moaA</name>
    <name type="ordered locus">BWG_0634</name>
</gene>
<accession>C4ZXV3</accession>
<proteinExistence type="inferred from homology"/>
<sequence>MASQLTDAFARKFYYLRLSITDVCNFRCTYCLPDGYKPSGVTNKGFLTVDEIRRVTRAFARLGTEKVRLTGGEPSLRRDFTDIIAAVRENDAIRQIAVTTNGYRLERDVASWRDAGLTGINVSVDSLDARQFHAITGQDKFNQVMAGIDAAFEAGFEKVKVNTVLMRDVNHHQLDTFLNWIQHRPIQLRFIELMETGEGSELFRKHHISGQVLRDELLRRGWIHQLRQRSDGPAQVFCHPDYAGEIGLIMPYEKDFCATCNRLRVSSIGKLHLCLFGEGGVNLRDLLEDDTQQQALEARISAALREKKQTHFLHQNNTGITQNLSYIGG</sequence>
<evidence type="ECO:0000255" key="1">
    <source>
        <dbReference type="HAMAP-Rule" id="MF_01225"/>
    </source>
</evidence>
<evidence type="ECO:0000255" key="2">
    <source>
        <dbReference type="PROSITE-ProRule" id="PRU01266"/>
    </source>
</evidence>
<name>MOAA_ECOBW</name>
<comment type="function">
    <text evidence="1">Catalyzes the cyclization of GTP to (8S)-3',8-cyclo-7,8-dihydroguanosine 5'-triphosphate.</text>
</comment>
<comment type="catalytic activity">
    <reaction evidence="1">
        <text>GTP + AH2 + S-adenosyl-L-methionine = (8S)-3',8-cyclo-7,8-dihydroguanosine 5'-triphosphate + 5'-deoxyadenosine + L-methionine + A + H(+)</text>
        <dbReference type="Rhea" id="RHEA:49576"/>
        <dbReference type="ChEBI" id="CHEBI:13193"/>
        <dbReference type="ChEBI" id="CHEBI:15378"/>
        <dbReference type="ChEBI" id="CHEBI:17319"/>
        <dbReference type="ChEBI" id="CHEBI:17499"/>
        <dbReference type="ChEBI" id="CHEBI:37565"/>
        <dbReference type="ChEBI" id="CHEBI:57844"/>
        <dbReference type="ChEBI" id="CHEBI:59789"/>
        <dbReference type="ChEBI" id="CHEBI:131766"/>
        <dbReference type="EC" id="4.1.99.22"/>
    </reaction>
</comment>
<comment type="cofactor">
    <cofactor evidence="1">
        <name>[4Fe-4S] cluster</name>
        <dbReference type="ChEBI" id="CHEBI:49883"/>
    </cofactor>
    <text evidence="1">Binds 2 [4Fe-4S] clusters. Binds 1 [4Fe-4S] cluster coordinated with 3 cysteines and an exchangeable S-adenosyl-L-methionine and 1 [4Fe-4S] cluster coordinated with 3 cysteines and the GTP-derived substrate.</text>
</comment>
<comment type="pathway">
    <text evidence="1">Cofactor biosynthesis; molybdopterin biosynthesis.</text>
</comment>
<comment type="subunit">
    <text evidence="1">Monomer and homodimer.</text>
</comment>
<comment type="similarity">
    <text evidence="1">Belongs to the radical SAM superfamily. MoaA family.</text>
</comment>
<dbReference type="EC" id="4.1.99.22" evidence="1"/>
<dbReference type="EMBL" id="CP001396">
    <property type="protein sequence ID" value="ACR63797.1"/>
    <property type="molecule type" value="Genomic_DNA"/>
</dbReference>
<dbReference type="RefSeq" id="WP_001350494.1">
    <property type="nucleotide sequence ID" value="NC_012759.1"/>
</dbReference>
<dbReference type="SMR" id="C4ZXV3"/>
<dbReference type="KEGG" id="ebw:BWG_0634"/>
<dbReference type="HOGENOM" id="CLU_009273_0_1_6"/>
<dbReference type="UniPathway" id="UPA00344"/>
<dbReference type="GO" id="GO:0051539">
    <property type="term" value="F:4 iron, 4 sulfur cluster binding"/>
    <property type="evidence" value="ECO:0007669"/>
    <property type="project" value="UniProtKB-UniRule"/>
</dbReference>
<dbReference type="GO" id="GO:0061799">
    <property type="term" value="F:cyclic pyranopterin monophosphate synthase activity"/>
    <property type="evidence" value="ECO:0007669"/>
    <property type="project" value="TreeGrafter"/>
</dbReference>
<dbReference type="GO" id="GO:0061798">
    <property type="term" value="F:GTP 3',8'-cyclase activity"/>
    <property type="evidence" value="ECO:0007669"/>
    <property type="project" value="UniProtKB-UniRule"/>
</dbReference>
<dbReference type="GO" id="GO:0005525">
    <property type="term" value="F:GTP binding"/>
    <property type="evidence" value="ECO:0007669"/>
    <property type="project" value="UniProtKB-UniRule"/>
</dbReference>
<dbReference type="GO" id="GO:0046872">
    <property type="term" value="F:metal ion binding"/>
    <property type="evidence" value="ECO:0007669"/>
    <property type="project" value="UniProtKB-KW"/>
</dbReference>
<dbReference type="GO" id="GO:1904047">
    <property type="term" value="F:S-adenosyl-L-methionine binding"/>
    <property type="evidence" value="ECO:0007669"/>
    <property type="project" value="UniProtKB-UniRule"/>
</dbReference>
<dbReference type="GO" id="GO:0006777">
    <property type="term" value="P:Mo-molybdopterin cofactor biosynthetic process"/>
    <property type="evidence" value="ECO:0007669"/>
    <property type="project" value="UniProtKB-UniRule"/>
</dbReference>
<dbReference type="CDD" id="cd01335">
    <property type="entry name" value="Radical_SAM"/>
    <property type="match status" value="1"/>
</dbReference>
<dbReference type="CDD" id="cd21117">
    <property type="entry name" value="Twitch_MoaA"/>
    <property type="match status" value="1"/>
</dbReference>
<dbReference type="FunFam" id="3.20.20.70:FF:000057">
    <property type="entry name" value="GTP 3',8-cyclase"/>
    <property type="match status" value="1"/>
</dbReference>
<dbReference type="Gene3D" id="3.20.20.70">
    <property type="entry name" value="Aldolase class I"/>
    <property type="match status" value="1"/>
</dbReference>
<dbReference type="HAMAP" id="MF_01225_B">
    <property type="entry name" value="MoaA_B"/>
    <property type="match status" value="1"/>
</dbReference>
<dbReference type="InterPro" id="IPR013785">
    <property type="entry name" value="Aldolase_TIM"/>
</dbReference>
<dbReference type="InterPro" id="IPR006638">
    <property type="entry name" value="Elp3/MiaA/NifB-like_rSAM"/>
</dbReference>
<dbReference type="InterPro" id="IPR013483">
    <property type="entry name" value="MoaA"/>
</dbReference>
<dbReference type="InterPro" id="IPR000385">
    <property type="entry name" value="MoaA_NifB_PqqE_Fe-S-bd_CS"/>
</dbReference>
<dbReference type="InterPro" id="IPR010505">
    <property type="entry name" value="MoaA_twitch"/>
</dbReference>
<dbReference type="InterPro" id="IPR050105">
    <property type="entry name" value="MoCo_biosynth_MoaA/MoaC"/>
</dbReference>
<dbReference type="InterPro" id="IPR007197">
    <property type="entry name" value="rSAM"/>
</dbReference>
<dbReference type="NCBIfam" id="TIGR02666">
    <property type="entry name" value="moaA"/>
    <property type="match status" value="1"/>
</dbReference>
<dbReference type="PANTHER" id="PTHR22960:SF28">
    <property type="entry name" value="GTP 3',8-CYCLASE"/>
    <property type="match status" value="1"/>
</dbReference>
<dbReference type="PANTHER" id="PTHR22960">
    <property type="entry name" value="MOLYBDOPTERIN COFACTOR SYNTHESIS PROTEIN A"/>
    <property type="match status" value="1"/>
</dbReference>
<dbReference type="Pfam" id="PF13353">
    <property type="entry name" value="Fer4_12"/>
    <property type="match status" value="1"/>
</dbReference>
<dbReference type="Pfam" id="PF06463">
    <property type="entry name" value="Mob_synth_C"/>
    <property type="match status" value="1"/>
</dbReference>
<dbReference type="Pfam" id="PF04055">
    <property type="entry name" value="Radical_SAM"/>
    <property type="match status" value="1"/>
</dbReference>
<dbReference type="SFLD" id="SFLDG01383">
    <property type="entry name" value="cyclic_pyranopterin_phosphate"/>
    <property type="match status" value="1"/>
</dbReference>
<dbReference type="SFLD" id="SFLDG01067">
    <property type="entry name" value="SPASM/twitch_domain_containing"/>
    <property type="match status" value="1"/>
</dbReference>
<dbReference type="SMART" id="SM00729">
    <property type="entry name" value="Elp3"/>
    <property type="match status" value="1"/>
</dbReference>
<dbReference type="SUPFAM" id="SSF102114">
    <property type="entry name" value="Radical SAM enzymes"/>
    <property type="match status" value="1"/>
</dbReference>
<dbReference type="PROSITE" id="PS01305">
    <property type="entry name" value="MOAA_NIFB_PQQE"/>
    <property type="match status" value="1"/>
</dbReference>
<dbReference type="PROSITE" id="PS51918">
    <property type="entry name" value="RADICAL_SAM"/>
    <property type="match status" value="1"/>
</dbReference>